<protein>
    <recommendedName>
        <fullName>Kunitz-type protease inhibitor 2</fullName>
    </recommendedName>
    <alternativeName>
        <fullName>Hepatocyte growth factor activator inhibitor type 2</fullName>
        <shortName>HAI-2</shortName>
    </alternativeName>
</protein>
<comment type="function">
    <text evidence="2">Inhibitor of HGFAC (By similarity). Also inhibits plasmin, and plasma and tissue kallikrein (By similarity). Inhibits serine protease activity of TMPRSS13 (By similarity). Inhibits serine protease activity of ST14/matriptase in vitro (By similarity).</text>
</comment>
<comment type="subunit">
    <text evidence="2">Interacts with TMPRSS13; the interaction promotes the phosphorylation and cell membrane localization of TMPRSS13.</text>
</comment>
<comment type="subcellular location">
    <subcellularLocation>
        <location evidence="2">Cell membrane</location>
        <topology evidence="3">Single-pass type I membrane protein</topology>
    </subcellularLocation>
    <subcellularLocation>
        <location evidence="2">Cytoplasm</location>
    </subcellularLocation>
</comment>
<comment type="alternative products">
    <event type="alternative splicing"/>
    <isoform>
        <id>Q9WU03-1</id>
        <name>1</name>
        <sequence type="displayed"/>
    </isoform>
    <isoform>
        <id>Q9WU03-2</id>
        <name>2</name>
        <sequence type="described" ref="VSP_003034"/>
    </isoform>
    <isoform>
        <id>Q9WU03-3</id>
        <name>3</name>
        <sequence type="described" ref="VSP_003034 VSP_003035 VSP_003036"/>
    </isoform>
</comment>
<comment type="tissue specificity">
    <text>Isoform 2 is more predominantly expressed than isoform 1.</text>
</comment>
<comment type="domain">
    <text>This inhibitor contains two inhibitory domains.</text>
</comment>
<proteinExistence type="evidence at protein level"/>
<dbReference type="EMBL" id="AF099016">
    <property type="protein sequence ID" value="AAD22172.1"/>
    <property type="molecule type" value="mRNA"/>
</dbReference>
<dbReference type="EMBL" id="AF099019">
    <property type="protein sequence ID" value="AAD22173.1"/>
    <property type="molecule type" value="mRNA"/>
</dbReference>
<dbReference type="EMBL" id="AF099020">
    <property type="protein sequence ID" value="AAD22174.1"/>
    <property type="molecule type" value="mRNA"/>
</dbReference>
<dbReference type="EMBL" id="BC003431">
    <property type="protein sequence ID" value="AAH03431.1"/>
    <property type="molecule type" value="mRNA"/>
</dbReference>
<dbReference type="EMBL" id="BC026419">
    <property type="protein sequence ID" value="AAH26419.1"/>
    <property type="molecule type" value="mRNA"/>
</dbReference>
<dbReference type="CCDS" id="CCDS39869.1">
    <molecule id="Q9WU03-2"/>
</dbReference>
<dbReference type="CCDS" id="CCDS39870.1">
    <molecule id="Q9WU03-1"/>
</dbReference>
<dbReference type="PIR" id="JG0185">
    <property type="entry name" value="JG0185"/>
</dbReference>
<dbReference type="RefSeq" id="NP_001076017.1">
    <molecule id="Q9WU03-2"/>
    <property type="nucleotide sequence ID" value="NM_001082548.1"/>
</dbReference>
<dbReference type="RefSeq" id="NP_035594.1">
    <molecule id="Q9WU03-1"/>
    <property type="nucleotide sequence ID" value="NM_011464.2"/>
</dbReference>
<dbReference type="SMR" id="Q9WU03"/>
<dbReference type="FunCoup" id="Q9WU03">
    <property type="interactions" value="229"/>
</dbReference>
<dbReference type="STRING" id="10090.ENSMUSP00000096204"/>
<dbReference type="MEROPS" id="I02.009"/>
<dbReference type="MEROPS" id="I02.010"/>
<dbReference type="GlyCosmos" id="Q9WU03">
    <property type="glycosylation" value="2 sites, No reported glycans"/>
</dbReference>
<dbReference type="GlyGen" id="Q9WU03">
    <property type="glycosylation" value="2 sites"/>
</dbReference>
<dbReference type="iPTMnet" id="Q9WU03"/>
<dbReference type="PhosphoSitePlus" id="Q9WU03"/>
<dbReference type="SwissPalm" id="Q9WU03"/>
<dbReference type="PaxDb" id="10090-ENSMUSP00000096204"/>
<dbReference type="ProteomicsDB" id="261620">
    <molecule id="Q9WU03-1"/>
</dbReference>
<dbReference type="ProteomicsDB" id="261621">
    <molecule id="Q9WU03-2"/>
</dbReference>
<dbReference type="Antibodypedia" id="2598">
    <property type="antibodies" value="388 antibodies from 32 providers"/>
</dbReference>
<dbReference type="DNASU" id="20733"/>
<dbReference type="Ensembl" id="ENSMUST00000098604.12">
    <molecule id="Q9WU03-1"/>
    <property type="protein sequence ID" value="ENSMUSP00000096204.5"/>
    <property type="gene ID" value="ENSMUSG00000074227.13"/>
</dbReference>
<dbReference type="Ensembl" id="ENSMUST00000108236.5">
    <molecule id="Q9WU03-2"/>
    <property type="protein sequence ID" value="ENSMUSP00000103871.4"/>
    <property type="gene ID" value="ENSMUSG00000074227.13"/>
</dbReference>
<dbReference type="Ensembl" id="ENSMUST00000207601.2">
    <molecule id="Q9WU03-3"/>
    <property type="protein sequence ID" value="ENSMUSP00000146580.2"/>
    <property type="gene ID" value="ENSMUSG00000074227.13"/>
</dbReference>
<dbReference type="GeneID" id="20733"/>
<dbReference type="KEGG" id="mmu:20733"/>
<dbReference type="UCSC" id="uc009gbk.1">
    <molecule id="Q9WU03-1"/>
    <property type="organism name" value="mouse"/>
</dbReference>
<dbReference type="UCSC" id="uc009gbl.1">
    <molecule id="Q9WU03-2"/>
    <property type="organism name" value="mouse"/>
</dbReference>
<dbReference type="AGR" id="MGI:1338031"/>
<dbReference type="CTD" id="10653"/>
<dbReference type="MGI" id="MGI:1338031">
    <property type="gene designation" value="Spint2"/>
</dbReference>
<dbReference type="VEuPathDB" id="HostDB:ENSMUSG00000074227"/>
<dbReference type="eggNOG" id="KOG4295">
    <property type="taxonomic scope" value="Eukaryota"/>
</dbReference>
<dbReference type="GeneTree" id="ENSGT00940000160348"/>
<dbReference type="HOGENOM" id="CLU_1274754_0_0_1"/>
<dbReference type="InParanoid" id="Q9WU03"/>
<dbReference type="OMA" id="KEECMHR"/>
<dbReference type="OrthoDB" id="196393at2759"/>
<dbReference type="PhylomeDB" id="Q9WU03"/>
<dbReference type="TreeFam" id="TF326553"/>
<dbReference type="Reactome" id="R-MMU-6806942">
    <property type="pathway name" value="MET Receptor Activation"/>
</dbReference>
<dbReference type="Reactome" id="R-MMU-8852405">
    <property type="pathway name" value="Signaling by MST1"/>
</dbReference>
<dbReference type="BioGRID-ORCS" id="20733">
    <property type="hits" value="1 hit in 76 CRISPR screens"/>
</dbReference>
<dbReference type="ChiTaRS" id="Spint2">
    <property type="organism name" value="mouse"/>
</dbReference>
<dbReference type="PRO" id="PR:Q9WU03"/>
<dbReference type="Proteomes" id="UP000000589">
    <property type="component" value="Chromosome 7"/>
</dbReference>
<dbReference type="RNAct" id="Q9WU03">
    <property type="molecule type" value="protein"/>
</dbReference>
<dbReference type="Bgee" id="ENSMUSG00000074227">
    <property type="expression patterns" value="Expressed in small intestine Peyer's patch and 242 other cell types or tissues"/>
</dbReference>
<dbReference type="GO" id="GO:0005794">
    <property type="term" value="C:Golgi apparatus"/>
    <property type="evidence" value="ECO:0007669"/>
    <property type="project" value="Ensembl"/>
</dbReference>
<dbReference type="GO" id="GO:0005886">
    <property type="term" value="C:plasma membrane"/>
    <property type="evidence" value="ECO:0007669"/>
    <property type="project" value="UniProtKB-SubCell"/>
</dbReference>
<dbReference type="GO" id="GO:0004867">
    <property type="term" value="F:serine-type endopeptidase inhibitor activity"/>
    <property type="evidence" value="ECO:0007669"/>
    <property type="project" value="UniProtKB-KW"/>
</dbReference>
<dbReference type="GO" id="GO:0071711">
    <property type="term" value="P:basement membrane organization"/>
    <property type="evidence" value="ECO:0000315"/>
    <property type="project" value="MGI"/>
</dbReference>
<dbReference type="GO" id="GO:0060672">
    <property type="term" value="P:epithelial cell morphogenesis involved in placental branching"/>
    <property type="evidence" value="ECO:0000315"/>
    <property type="project" value="MGI"/>
</dbReference>
<dbReference type="GO" id="GO:0007163">
    <property type="term" value="P:establishment or maintenance of cell polarity"/>
    <property type="evidence" value="ECO:0000315"/>
    <property type="project" value="MGI"/>
</dbReference>
<dbReference type="GO" id="GO:2000146">
    <property type="term" value="P:negative regulation of cell motility"/>
    <property type="evidence" value="ECO:0000266"/>
    <property type="project" value="MGI"/>
</dbReference>
<dbReference type="GO" id="GO:0022408">
    <property type="term" value="P:negative regulation of cell-cell adhesion"/>
    <property type="evidence" value="ECO:0000266"/>
    <property type="project" value="MGI"/>
</dbReference>
<dbReference type="GO" id="GO:0001843">
    <property type="term" value="P:neural tube closure"/>
    <property type="evidence" value="ECO:0000315"/>
    <property type="project" value="MGI"/>
</dbReference>
<dbReference type="CDD" id="cd22621">
    <property type="entry name" value="Kunitz_HAI2_1-like"/>
    <property type="match status" value="1"/>
</dbReference>
<dbReference type="CDD" id="cd22622">
    <property type="entry name" value="Kunitz_HAI2_2-like"/>
    <property type="match status" value="1"/>
</dbReference>
<dbReference type="FunFam" id="4.10.410.10:FF:000014">
    <property type="entry name" value="Serine peptidase inhibitor, Kunitz type, 2"/>
    <property type="match status" value="2"/>
</dbReference>
<dbReference type="Gene3D" id="4.10.410.10">
    <property type="entry name" value="Pancreatic trypsin inhibitor Kunitz domain"/>
    <property type="match status" value="2"/>
</dbReference>
<dbReference type="InterPro" id="IPR002223">
    <property type="entry name" value="Kunitz_BPTI"/>
</dbReference>
<dbReference type="InterPro" id="IPR036880">
    <property type="entry name" value="Kunitz_BPTI_sf"/>
</dbReference>
<dbReference type="InterPro" id="IPR020901">
    <property type="entry name" value="Prtase_inh_Kunz-CS"/>
</dbReference>
<dbReference type="PANTHER" id="PTHR47247">
    <property type="entry name" value="KUNITZ-TYPE PROTEASE INHIBITOR 2"/>
    <property type="match status" value="1"/>
</dbReference>
<dbReference type="PANTHER" id="PTHR47247:SF1">
    <property type="entry name" value="KUNITZ-TYPE PROTEASE INHIBITOR 2"/>
    <property type="match status" value="1"/>
</dbReference>
<dbReference type="Pfam" id="PF00014">
    <property type="entry name" value="Kunitz_BPTI"/>
    <property type="match status" value="2"/>
</dbReference>
<dbReference type="PRINTS" id="PR00759">
    <property type="entry name" value="BASICPTASE"/>
</dbReference>
<dbReference type="SMART" id="SM00131">
    <property type="entry name" value="KU"/>
    <property type="match status" value="2"/>
</dbReference>
<dbReference type="SUPFAM" id="SSF57362">
    <property type="entry name" value="BPTI-like"/>
    <property type="match status" value="2"/>
</dbReference>
<dbReference type="PROSITE" id="PS00280">
    <property type="entry name" value="BPTI_KUNITZ_1"/>
    <property type="match status" value="2"/>
</dbReference>
<dbReference type="PROSITE" id="PS50279">
    <property type="entry name" value="BPTI_KUNITZ_2"/>
    <property type="match status" value="2"/>
</dbReference>
<sequence>MAQLCELRRGRALLALVASLLLSGAQVASRELDVHESCGVSKVVGKCRASIPRWWYNITDGSCQPFVYGGCEGNGNNYQSKEECLDKCAGVTENTTDDMARNRNGADSSVLSVPRKQSAEDLSAEIFNYEEYCVPKAVTGPCRAAFPRWYYDTEKNSCISFIYGGCRGNKNSYLSQEACMQHCSGKQMHPFLTPGLKAVILVGLFLMVLILLLGTSMVCLIRVVRRKQERALRTVWSTADDKEQLVKNTCVL</sequence>
<organism>
    <name type="scientific">Mus musculus</name>
    <name type="common">Mouse</name>
    <dbReference type="NCBI Taxonomy" id="10090"/>
    <lineage>
        <taxon>Eukaryota</taxon>
        <taxon>Metazoa</taxon>
        <taxon>Chordata</taxon>
        <taxon>Craniata</taxon>
        <taxon>Vertebrata</taxon>
        <taxon>Euteleostomi</taxon>
        <taxon>Mammalia</taxon>
        <taxon>Eutheria</taxon>
        <taxon>Euarchontoglires</taxon>
        <taxon>Glires</taxon>
        <taxon>Rodentia</taxon>
        <taxon>Myomorpha</taxon>
        <taxon>Muroidea</taxon>
        <taxon>Muridae</taxon>
        <taxon>Murinae</taxon>
        <taxon>Mus</taxon>
        <taxon>Mus</taxon>
    </lineage>
</organism>
<gene>
    <name type="primary">Spint2</name>
    <name type="synonym">Hai2</name>
</gene>
<reference key="1">
    <citation type="journal article" date="1999" name="Biochem. Biophys. Res. Commun.">
        <title>Hepatocyte growth factor activator inhibitor type 2 lacking the first Kunitz-type serine proteinase inhibitor domain is a predominant product in mouse but not in human.</title>
        <authorList>
            <person name="Itoh H."/>
            <person name="Kataoka H."/>
            <person name="Hamasuna R."/>
            <person name="Kitamura N."/>
            <person name="Koono M."/>
        </authorList>
    </citation>
    <scope>NUCLEOTIDE SEQUENCE [MRNA]</scope>
    <scope>ALTERNATIVE SPLICING</scope>
    <source>
        <strain>BALB/cJ</strain>
    </source>
</reference>
<reference key="2">
    <citation type="journal article" date="2004" name="Genome Res.">
        <title>The status, quality, and expansion of the NIH full-length cDNA project: the Mammalian Gene Collection (MGC).</title>
        <authorList>
            <consortium name="The MGC Project Team"/>
        </authorList>
    </citation>
    <scope>NUCLEOTIDE SEQUENCE [LARGE SCALE MRNA] (ISOFORM 2)</scope>
    <source>
        <strain>Czech II</strain>
        <strain>FVB/N</strain>
        <tissue>Colon</tissue>
        <tissue>Mammary tumor</tissue>
    </source>
</reference>
<reference key="3">
    <citation type="journal article" date="2010" name="Cell">
        <title>A tissue-specific atlas of mouse protein phosphorylation and expression.</title>
        <authorList>
            <person name="Huttlin E.L."/>
            <person name="Jedrychowski M.P."/>
            <person name="Elias J.E."/>
            <person name="Goswami T."/>
            <person name="Rad R."/>
            <person name="Beausoleil S.A."/>
            <person name="Villen J."/>
            <person name="Haas W."/>
            <person name="Sowa M.E."/>
            <person name="Gygi S.P."/>
        </authorList>
    </citation>
    <scope>IDENTIFICATION BY MASS SPECTROMETRY [LARGE SCALE ANALYSIS]</scope>
    <source>
        <tissue>Kidney</tissue>
        <tissue>Liver</tissue>
        <tissue>Lung</tissue>
        <tissue>Pancreas</tissue>
        <tissue>Testis</tissue>
    </source>
</reference>
<name>SPIT2_MOUSE</name>
<keyword id="KW-0025">Alternative splicing</keyword>
<keyword id="KW-1003">Cell membrane</keyword>
<keyword id="KW-0963">Cytoplasm</keyword>
<keyword id="KW-1015">Disulfide bond</keyword>
<keyword id="KW-0325">Glycoprotein</keyword>
<keyword id="KW-0472">Membrane</keyword>
<keyword id="KW-0646">Protease inhibitor</keyword>
<keyword id="KW-1185">Reference proteome</keyword>
<keyword id="KW-0677">Repeat</keyword>
<keyword id="KW-0722">Serine protease inhibitor</keyword>
<keyword id="KW-0732">Signal</keyword>
<keyword id="KW-0812">Transmembrane</keyword>
<keyword id="KW-1133">Transmembrane helix</keyword>
<evidence type="ECO:0000250" key="1"/>
<evidence type="ECO:0000250" key="2">
    <source>
        <dbReference type="UniProtKB" id="O43291"/>
    </source>
</evidence>
<evidence type="ECO:0000255" key="3"/>
<evidence type="ECO:0000255" key="4">
    <source>
        <dbReference type="PROSITE-ProRule" id="PRU00031"/>
    </source>
</evidence>
<evidence type="ECO:0000303" key="5">
    <source>
    </source>
</evidence>
<evidence type="ECO:0000305" key="6"/>
<accession>Q9WU03</accession>
<accession>Q5D0F2</accession>
<accession>Q9WU04</accession>
<accession>Q9WU05</accession>
<feature type="signal peptide" evidence="3">
    <location>
        <begin position="1"/>
        <end position="27"/>
    </location>
</feature>
<feature type="chain" id="PRO_0000016886" description="Kunitz-type protease inhibitor 2">
    <location>
        <begin position="28"/>
        <end position="252"/>
    </location>
</feature>
<feature type="topological domain" description="Extracellular" evidence="3">
    <location>
        <begin position="28"/>
        <end position="197"/>
    </location>
</feature>
<feature type="transmembrane region" description="Helical" evidence="3">
    <location>
        <begin position="198"/>
        <end position="218"/>
    </location>
</feature>
<feature type="topological domain" description="Cytoplasmic" evidence="3">
    <location>
        <begin position="219"/>
        <end position="252"/>
    </location>
</feature>
<feature type="domain" description="BPTI/Kunitz inhibitor 1" evidence="4">
    <location>
        <begin position="38"/>
        <end position="88"/>
    </location>
</feature>
<feature type="domain" description="BPTI/Kunitz inhibitor 2" evidence="4">
    <location>
        <begin position="133"/>
        <end position="183"/>
    </location>
</feature>
<feature type="site" description="Reactive bond" evidence="1">
    <location>
        <begin position="48"/>
        <end position="49"/>
    </location>
</feature>
<feature type="site" description="Reactive bond" evidence="1">
    <location>
        <begin position="143"/>
        <end position="144"/>
    </location>
</feature>
<feature type="glycosylation site" description="N-linked (GlcNAc...) asparagine" evidence="3">
    <location>
        <position position="57"/>
    </location>
</feature>
<feature type="glycosylation site" description="N-linked (GlcNAc...) asparagine" evidence="3">
    <location>
        <position position="94"/>
    </location>
</feature>
<feature type="disulfide bond" evidence="4">
    <location>
        <begin position="38"/>
        <end position="88"/>
    </location>
</feature>
<feature type="disulfide bond" evidence="4">
    <location>
        <begin position="47"/>
        <end position="71"/>
    </location>
</feature>
<feature type="disulfide bond" evidence="4">
    <location>
        <begin position="63"/>
        <end position="84"/>
    </location>
</feature>
<feature type="disulfide bond" evidence="4">
    <location>
        <begin position="133"/>
        <end position="183"/>
    </location>
</feature>
<feature type="disulfide bond" evidence="4">
    <location>
        <begin position="142"/>
        <end position="166"/>
    </location>
</feature>
<feature type="disulfide bond" evidence="4">
    <location>
        <begin position="158"/>
        <end position="179"/>
    </location>
</feature>
<feature type="splice variant" id="VSP_003034" description="In isoform 2 and isoform 3." evidence="5">
    <location>
        <begin position="37"/>
        <end position="93"/>
    </location>
</feature>
<feature type="splice variant" id="VSP_003035" description="In isoform 3." evidence="6">
    <original>PRKQSAEDLSAEIFN</original>
    <variation>CFVELSVAALFLFYA</variation>
    <location>
        <begin position="114"/>
        <end position="128"/>
    </location>
</feature>
<feature type="splice variant" id="VSP_003036" description="In isoform 3." evidence="6">
    <location>
        <begin position="129"/>
        <end position="252"/>
    </location>
</feature>